<gene>
    <name evidence="1" type="primary">fbp</name>
    <name type="ordered locus">SSON_4413</name>
</gene>
<proteinExistence type="inferred from homology"/>
<keyword id="KW-0119">Carbohydrate metabolism</keyword>
<keyword id="KW-0963">Cytoplasm</keyword>
<keyword id="KW-0378">Hydrolase</keyword>
<keyword id="KW-0460">Magnesium</keyword>
<keyword id="KW-0479">Metal-binding</keyword>
<keyword id="KW-1185">Reference proteome</keyword>
<evidence type="ECO:0000255" key="1">
    <source>
        <dbReference type="HAMAP-Rule" id="MF_01855"/>
    </source>
</evidence>
<accession>Q3YUB9</accession>
<protein>
    <recommendedName>
        <fullName evidence="1">Fructose-1,6-bisphosphatase class 1</fullName>
        <shortName evidence="1">FBPase class 1</shortName>
        <ecNumber evidence="1">3.1.3.11</ecNumber>
    </recommendedName>
    <alternativeName>
        <fullName evidence="1">D-fructose-1,6-bisphosphate 1-phosphohydrolase class 1</fullName>
    </alternativeName>
</protein>
<name>F16PA_SHISS</name>
<reference key="1">
    <citation type="journal article" date="2005" name="Nucleic Acids Res.">
        <title>Genome dynamics and diversity of Shigella species, the etiologic agents of bacillary dysentery.</title>
        <authorList>
            <person name="Yang F."/>
            <person name="Yang J."/>
            <person name="Zhang X."/>
            <person name="Chen L."/>
            <person name="Jiang Y."/>
            <person name="Yan Y."/>
            <person name="Tang X."/>
            <person name="Wang J."/>
            <person name="Xiong Z."/>
            <person name="Dong J."/>
            <person name="Xue Y."/>
            <person name="Zhu Y."/>
            <person name="Xu X."/>
            <person name="Sun L."/>
            <person name="Chen S."/>
            <person name="Nie H."/>
            <person name="Peng J."/>
            <person name="Xu J."/>
            <person name="Wang Y."/>
            <person name="Yuan Z."/>
            <person name="Wen Y."/>
            <person name="Yao Z."/>
            <person name="Shen Y."/>
            <person name="Qiang B."/>
            <person name="Hou Y."/>
            <person name="Yu J."/>
            <person name="Jin Q."/>
        </authorList>
    </citation>
    <scope>NUCLEOTIDE SEQUENCE [LARGE SCALE GENOMIC DNA]</scope>
    <source>
        <strain>Ss046</strain>
    </source>
</reference>
<comment type="catalytic activity">
    <reaction evidence="1">
        <text>beta-D-fructose 1,6-bisphosphate + H2O = beta-D-fructose 6-phosphate + phosphate</text>
        <dbReference type="Rhea" id="RHEA:11064"/>
        <dbReference type="ChEBI" id="CHEBI:15377"/>
        <dbReference type="ChEBI" id="CHEBI:32966"/>
        <dbReference type="ChEBI" id="CHEBI:43474"/>
        <dbReference type="ChEBI" id="CHEBI:57634"/>
        <dbReference type="EC" id="3.1.3.11"/>
    </reaction>
</comment>
<comment type="cofactor">
    <cofactor evidence="1">
        <name>Mg(2+)</name>
        <dbReference type="ChEBI" id="CHEBI:18420"/>
    </cofactor>
    <text evidence="1">Binds 2 magnesium ions per subunit.</text>
</comment>
<comment type="pathway">
    <text evidence="1">Carbohydrate biosynthesis; gluconeogenesis.</text>
</comment>
<comment type="subunit">
    <text evidence="1">Homotetramer.</text>
</comment>
<comment type="subcellular location">
    <subcellularLocation>
        <location evidence="1">Cytoplasm</location>
    </subcellularLocation>
</comment>
<comment type="similarity">
    <text evidence="1">Belongs to the FBPase class 1 family.</text>
</comment>
<organism>
    <name type="scientific">Shigella sonnei (strain Ss046)</name>
    <dbReference type="NCBI Taxonomy" id="300269"/>
    <lineage>
        <taxon>Bacteria</taxon>
        <taxon>Pseudomonadati</taxon>
        <taxon>Pseudomonadota</taxon>
        <taxon>Gammaproteobacteria</taxon>
        <taxon>Enterobacterales</taxon>
        <taxon>Enterobacteriaceae</taxon>
        <taxon>Shigella</taxon>
    </lineage>
</organism>
<feature type="chain" id="PRO_0000364720" description="Fructose-1,6-bisphosphatase class 1">
    <location>
        <begin position="1"/>
        <end position="332"/>
    </location>
</feature>
<feature type="binding site" evidence="1">
    <location>
        <position position="89"/>
    </location>
    <ligand>
        <name>Mg(2+)</name>
        <dbReference type="ChEBI" id="CHEBI:18420"/>
        <label>1</label>
    </ligand>
</feature>
<feature type="binding site" evidence="1">
    <location>
        <position position="110"/>
    </location>
    <ligand>
        <name>Mg(2+)</name>
        <dbReference type="ChEBI" id="CHEBI:18420"/>
        <label>1</label>
    </ligand>
</feature>
<feature type="binding site" evidence="1">
    <location>
        <position position="110"/>
    </location>
    <ligand>
        <name>Mg(2+)</name>
        <dbReference type="ChEBI" id="CHEBI:18420"/>
        <label>2</label>
    </ligand>
</feature>
<feature type="binding site" evidence="1">
    <location>
        <position position="112"/>
    </location>
    <ligand>
        <name>Mg(2+)</name>
        <dbReference type="ChEBI" id="CHEBI:18420"/>
        <label>1</label>
    </ligand>
</feature>
<feature type="binding site" evidence="1">
    <location>
        <begin position="113"/>
        <end position="116"/>
    </location>
    <ligand>
        <name>substrate</name>
    </ligand>
</feature>
<feature type="binding site" evidence="1">
    <location>
        <position position="113"/>
    </location>
    <ligand>
        <name>Mg(2+)</name>
        <dbReference type="ChEBI" id="CHEBI:18420"/>
        <label>2</label>
    </ligand>
</feature>
<feature type="binding site" evidence="1">
    <location>
        <position position="206"/>
    </location>
    <ligand>
        <name>substrate</name>
    </ligand>
</feature>
<feature type="binding site" evidence="1">
    <location>
        <position position="239"/>
    </location>
    <ligand>
        <name>substrate</name>
    </ligand>
</feature>
<feature type="binding site" evidence="1">
    <location>
        <begin position="257"/>
        <end position="259"/>
    </location>
    <ligand>
        <name>substrate</name>
    </ligand>
</feature>
<feature type="binding site" evidence="1">
    <location>
        <position position="269"/>
    </location>
    <ligand>
        <name>substrate</name>
    </ligand>
</feature>
<feature type="binding site" evidence="1">
    <location>
        <position position="275"/>
    </location>
    <ligand>
        <name>Mg(2+)</name>
        <dbReference type="ChEBI" id="CHEBI:18420"/>
        <label>2</label>
    </ligand>
</feature>
<dbReference type="EC" id="3.1.3.11" evidence="1"/>
<dbReference type="EMBL" id="CP000038">
    <property type="protein sequence ID" value="AAZ90893.1"/>
    <property type="molecule type" value="Genomic_DNA"/>
</dbReference>
<dbReference type="RefSeq" id="WP_000853748.1">
    <property type="nucleotide sequence ID" value="NC_007384.1"/>
</dbReference>
<dbReference type="SMR" id="Q3YUB9"/>
<dbReference type="GeneID" id="93777593"/>
<dbReference type="KEGG" id="ssn:SSON_4413"/>
<dbReference type="HOGENOM" id="CLU_039977_2_2_6"/>
<dbReference type="UniPathway" id="UPA00138"/>
<dbReference type="Proteomes" id="UP000002529">
    <property type="component" value="Chromosome"/>
</dbReference>
<dbReference type="GO" id="GO:0005829">
    <property type="term" value="C:cytosol"/>
    <property type="evidence" value="ECO:0007669"/>
    <property type="project" value="TreeGrafter"/>
</dbReference>
<dbReference type="GO" id="GO:0042132">
    <property type="term" value="F:fructose 1,6-bisphosphate 1-phosphatase activity"/>
    <property type="evidence" value="ECO:0007669"/>
    <property type="project" value="UniProtKB-UniRule"/>
</dbReference>
<dbReference type="GO" id="GO:0000287">
    <property type="term" value="F:magnesium ion binding"/>
    <property type="evidence" value="ECO:0007669"/>
    <property type="project" value="UniProtKB-UniRule"/>
</dbReference>
<dbReference type="GO" id="GO:0030388">
    <property type="term" value="P:fructose 1,6-bisphosphate metabolic process"/>
    <property type="evidence" value="ECO:0007669"/>
    <property type="project" value="TreeGrafter"/>
</dbReference>
<dbReference type="GO" id="GO:0006002">
    <property type="term" value="P:fructose 6-phosphate metabolic process"/>
    <property type="evidence" value="ECO:0007669"/>
    <property type="project" value="TreeGrafter"/>
</dbReference>
<dbReference type="GO" id="GO:0006000">
    <property type="term" value="P:fructose metabolic process"/>
    <property type="evidence" value="ECO:0007669"/>
    <property type="project" value="TreeGrafter"/>
</dbReference>
<dbReference type="GO" id="GO:0006094">
    <property type="term" value="P:gluconeogenesis"/>
    <property type="evidence" value="ECO:0007669"/>
    <property type="project" value="UniProtKB-UniRule"/>
</dbReference>
<dbReference type="GO" id="GO:0005986">
    <property type="term" value="P:sucrose biosynthetic process"/>
    <property type="evidence" value="ECO:0007669"/>
    <property type="project" value="TreeGrafter"/>
</dbReference>
<dbReference type="CDD" id="cd00354">
    <property type="entry name" value="FBPase"/>
    <property type="match status" value="1"/>
</dbReference>
<dbReference type="FunFam" id="3.30.540.10:FF:000002">
    <property type="entry name" value="Fructose-1,6-bisphosphatase class 1"/>
    <property type="match status" value="1"/>
</dbReference>
<dbReference type="FunFam" id="3.40.190.80:FF:000001">
    <property type="entry name" value="Fructose-1,6-bisphosphatase class 1"/>
    <property type="match status" value="1"/>
</dbReference>
<dbReference type="Gene3D" id="3.40.190.80">
    <property type="match status" value="1"/>
</dbReference>
<dbReference type="Gene3D" id="3.30.540.10">
    <property type="entry name" value="Fructose-1,6-Bisphosphatase, subunit A, domain 1"/>
    <property type="match status" value="1"/>
</dbReference>
<dbReference type="HAMAP" id="MF_01855">
    <property type="entry name" value="FBPase_class1"/>
    <property type="match status" value="1"/>
</dbReference>
<dbReference type="InterPro" id="IPR044015">
    <property type="entry name" value="FBPase_C_dom"/>
</dbReference>
<dbReference type="InterPro" id="IPR000146">
    <property type="entry name" value="FBPase_class-1"/>
</dbReference>
<dbReference type="InterPro" id="IPR033391">
    <property type="entry name" value="FBPase_N"/>
</dbReference>
<dbReference type="InterPro" id="IPR028343">
    <property type="entry name" value="FBPtase"/>
</dbReference>
<dbReference type="InterPro" id="IPR020548">
    <property type="entry name" value="Fructose_bisphosphatase_AS"/>
</dbReference>
<dbReference type="NCBIfam" id="NF006778">
    <property type="entry name" value="PRK09293.1-1"/>
    <property type="match status" value="1"/>
</dbReference>
<dbReference type="PANTHER" id="PTHR11556">
    <property type="entry name" value="FRUCTOSE-1,6-BISPHOSPHATASE-RELATED"/>
    <property type="match status" value="1"/>
</dbReference>
<dbReference type="PANTHER" id="PTHR11556:SF35">
    <property type="entry name" value="SEDOHEPTULOSE-1,7-BISPHOSPHATASE, CHLOROPLASTIC"/>
    <property type="match status" value="1"/>
</dbReference>
<dbReference type="Pfam" id="PF00316">
    <property type="entry name" value="FBPase"/>
    <property type="match status" value="1"/>
</dbReference>
<dbReference type="Pfam" id="PF18913">
    <property type="entry name" value="FBPase_C"/>
    <property type="match status" value="1"/>
</dbReference>
<dbReference type="PIRSF" id="PIRSF500210">
    <property type="entry name" value="FBPtase"/>
    <property type="match status" value="1"/>
</dbReference>
<dbReference type="PIRSF" id="PIRSF000904">
    <property type="entry name" value="FBPtase_SBPase"/>
    <property type="match status" value="1"/>
</dbReference>
<dbReference type="PRINTS" id="PR00115">
    <property type="entry name" value="F16BPHPHTASE"/>
</dbReference>
<dbReference type="SUPFAM" id="SSF56655">
    <property type="entry name" value="Carbohydrate phosphatase"/>
    <property type="match status" value="1"/>
</dbReference>
<dbReference type="PROSITE" id="PS00124">
    <property type="entry name" value="FBPASE"/>
    <property type="match status" value="1"/>
</dbReference>
<sequence length="332" mass="36832">MKTLGEFIVEKQHEFSHATGELTALLSAIKLGAKIIHRDINKAGLVDILGASGAENAQGEVQQKLDLFANEKLKAALKARDIVAGIASEEEDEIVVFEGCEYAKYVVLMDPLDGSSNIDVNVSVGTIFSIYRRVTPVGTPVTEEDFLQPGNKQVAAGYVVYGSSTMLVYTTGCGVHAFTYDPSLGVFCLCQERMRFPEKGKTYSINEGNYIKFPNGVKKYIKFCQEEDKSTNRPYTSRYIGSLVADFHRNLLKGGIYLYPSTASHPDGKLRLLYECNPMAFLAEQAGGKASDGKERILDIIPETLHQRRSFFVGNDHMVEDVERFIREFPDA</sequence>